<dbReference type="EC" id="2.7.2.3" evidence="1"/>
<dbReference type="EMBL" id="CP001463">
    <property type="protein sequence ID" value="ACS89282.1"/>
    <property type="molecule type" value="Genomic_DNA"/>
</dbReference>
<dbReference type="RefSeq" id="WP_012766243.1">
    <property type="nucleotide sequence ID" value="NC_012883.1"/>
</dbReference>
<dbReference type="SMR" id="C6A0Y7"/>
<dbReference type="STRING" id="604354.TSIB_0215"/>
<dbReference type="GeneID" id="8095187"/>
<dbReference type="KEGG" id="tsi:TSIB_0215"/>
<dbReference type="eggNOG" id="arCOG00496">
    <property type="taxonomic scope" value="Archaea"/>
</dbReference>
<dbReference type="HOGENOM" id="CLU_025427_0_2_2"/>
<dbReference type="OrthoDB" id="6575at2157"/>
<dbReference type="UniPathway" id="UPA00109">
    <property type="reaction ID" value="UER00185"/>
</dbReference>
<dbReference type="Proteomes" id="UP000009079">
    <property type="component" value="Chromosome"/>
</dbReference>
<dbReference type="GO" id="GO:0005829">
    <property type="term" value="C:cytosol"/>
    <property type="evidence" value="ECO:0007669"/>
    <property type="project" value="TreeGrafter"/>
</dbReference>
<dbReference type="GO" id="GO:0043531">
    <property type="term" value="F:ADP binding"/>
    <property type="evidence" value="ECO:0007669"/>
    <property type="project" value="TreeGrafter"/>
</dbReference>
<dbReference type="GO" id="GO:0005524">
    <property type="term" value="F:ATP binding"/>
    <property type="evidence" value="ECO:0007669"/>
    <property type="project" value="UniProtKB-KW"/>
</dbReference>
<dbReference type="GO" id="GO:0004618">
    <property type="term" value="F:phosphoglycerate kinase activity"/>
    <property type="evidence" value="ECO:0007669"/>
    <property type="project" value="UniProtKB-UniRule"/>
</dbReference>
<dbReference type="GO" id="GO:0006094">
    <property type="term" value="P:gluconeogenesis"/>
    <property type="evidence" value="ECO:0007669"/>
    <property type="project" value="TreeGrafter"/>
</dbReference>
<dbReference type="GO" id="GO:0006096">
    <property type="term" value="P:glycolytic process"/>
    <property type="evidence" value="ECO:0007669"/>
    <property type="project" value="UniProtKB-UniRule"/>
</dbReference>
<dbReference type="FunFam" id="3.40.50.1260:FF:000006">
    <property type="entry name" value="Phosphoglycerate kinase"/>
    <property type="match status" value="1"/>
</dbReference>
<dbReference type="FunFam" id="3.40.50.1260:FF:000012">
    <property type="entry name" value="Phosphoglycerate kinase"/>
    <property type="match status" value="1"/>
</dbReference>
<dbReference type="Gene3D" id="3.40.50.1260">
    <property type="entry name" value="Phosphoglycerate kinase, N-terminal domain"/>
    <property type="match status" value="2"/>
</dbReference>
<dbReference type="HAMAP" id="MF_00145">
    <property type="entry name" value="Phosphoglyc_kinase"/>
    <property type="match status" value="1"/>
</dbReference>
<dbReference type="InterPro" id="IPR001576">
    <property type="entry name" value="Phosphoglycerate_kinase"/>
</dbReference>
<dbReference type="InterPro" id="IPR015824">
    <property type="entry name" value="Phosphoglycerate_kinase_N"/>
</dbReference>
<dbReference type="InterPro" id="IPR036043">
    <property type="entry name" value="Phosphoglycerate_kinase_sf"/>
</dbReference>
<dbReference type="PANTHER" id="PTHR11406">
    <property type="entry name" value="PHOSPHOGLYCERATE KINASE"/>
    <property type="match status" value="1"/>
</dbReference>
<dbReference type="PANTHER" id="PTHR11406:SF23">
    <property type="entry name" value="PHOSPHOGLYCERATE KINASE 1, CHLOROPLASTIC-RELATED"/>
    <property type="match status" value="1"/>
</dbReference>
<dbReference type="Pfam" id="PF00162">
    <property type="entry name" value="PGK"/>
    <property type="match status" value="1"/>
</dbReference>
<dbReference type="PIRSF" id="PIRSF000724">
    <property type="entry name" value="Pgk"/>
    <property type="match status" value="1"/>
</dbReference>
<dbReference type="PRINTS" id="PR00477">
    <property type="entry name" value="PHGLYCKINASE"/>
</dbReference>
<dbReference type="SUPFAM" id="SSF53748">
    <property type="entry name" value="Phosphoglycerate kinase"/>
    <property type="match status" value="1"/>
</dbReference>
<keyword id="KW-0067">ATP-binding</keyword>
<keyword id="KW-0963">Cytoplasm</keyword>
<keyword id="KW-0324">Glycolysis</keyword>
<keyword id="KW-0418">Kinase</keyword>
<keyword id="KW-0547">Nucleotide-binding</keyword>
<keyword id="KW-1185">Reference proteome</keyword>
<keyword id="KW-0808">Transferase</keyword>
<name>PGK_THESM</name>
<accession>C6A0Y7</accession>
<reference key="1">
    <citation type="journal article" date="2009" name="Appl. Environ. Microbiol.">
        <title>Metabolic versatility and indigenous origin of the archaeon Thermococcus sibiricus, isolated from a siberian oil reservoir, as revealed by genome analysis.</title>
        <authorList>
            <person name="Mardanov A.V."/>
            <person name="Ravin N.V."/>
            <person name="Svetlitchnyi V.A."/>
            <person name="Beletsky A.V."/>
            <person name="Miroshnichenko M.L."/>
            <person name="Bonch-Osmolovskaya E.A."/>
            <person name="Skryabin K.G."/>
        </authorList>
    </citation>
    <scope>NUCLEOTIDE SEQUENCE [LARGE SCALE GENOMIC DNA]</scope>
    <source>
        <strain>DSM 12597 / MM 739</strain>
    </source>
</reference>
<organism>
    <name type="scientific">Thermococcus sibiricus (strain DSM 12597 / MM 739)</name>
    <dbReference type="NCBI Taxonomy" id="604354"/>
    <lineage>
        <taxon>Archaea</taxon>
        <taxon>Methanobacteriati</taxon>
        <taxon>Methanobacteriota</taxon>
        <taxon>Thermococci</taxon>
        <taxon>Thermococcales</taxon>
        <taxon>Thermococcaceae</taxon>
        <taxon>Thermococcus</taxon>
    </lineage>
</organism>
<evidence type="ECO:0000255" key="1">
    <source>
        <dbReference type="HAMAP-Rule" id="MF_00145"/>
    </source>
</evidence>
<protein>
    <recommendedName>
        <fullName evidence="1">Phosphoglycerate kinase</fullName>
        <ecNumber evidence="1">2.7.2.3</ecNumber>
    </recommendedName>
</protein>
<gene>
    <name evidence="1" type="primary">pgk</name>
    <name type="ordered locus">TSIB_0215</name>
</gene>
<proteinExistence type="inferred from homology"/>
<comment type="catalytic activity">
    <reaction evidence="1">
        <text>(2R)-3-phosphoglycerate + ATP = (2R)-3-phospho-glyceroyl phosphate + ADP</text>
        <dbReference type="Rhea" id="RHEA:14801"/>
        <dbReference type="ChEBI" id="CHEBI:30616"/>
        <dbReference type="ChEBI" id="CHEBI:57604"/>
        <dbReference type="ChEBI" id="CHEBI:58272"/>
        <dbReference type="ChEBI" id="CHEBI:456216"/>
        <dbReference type="EC" id="2.7.2.3"/>
    </reaction>
</comment>
<comment type="pathway">
    <text evidence="1">Carbohydrate degradation; glycolysis; pyruvate from D-glyceraldehyde 3-phosphate: step 2/5.</text>
</comment>
<comment type="subunit">
    <text evidence="1">Monomer.</text>
</comment>
<comment type="subcellular location">
    <subcellularLocation>
        <location evidence="1">Cytoplasm</location>
    </subcellularLocation>
</comment>
<comment type="similarity">
    <text evidence="1">Belongs to the phosphoglycerate kinase family.</text>
</comment>
<feature type="chain" id="PRO_1000203351" description="Phosphoglycerate kinase">
    <location>
        <begin position="1"/>
        <end position="413"/>
    </location>
</feature>
<feature type="binding site" evidence="1">
    <location>
        <begin position="19"/>
        <end position="21"/>
    </location>
    <ligand>
        <name>substrate</name>
    </ligand>
</feature>
<feature type="binding site" evidence="1">
    <location>
        <position position="34"/>
    </location>
    <ligand>
        <name>substrate</name>
    </ligand>
</feature>
<feature type="binding site" evidence="1">
    <location>
        <begin position="57"/>
        <end position="60"/>
    </location>
    <ligand>
        <name>substrate</name>
    </ligand>
</feature>
<feature type="binding site" evidence="1">
    <location>
        <position position="114"/>
    </location>
    <ligand>
        <name>substrate</name>
    </ligand>
</feature>
<feature type="binding site" evidence="1">
    <location>
        <position position="154"/>
    </location>
    <ligand>
        <name>substrate</name>
    </ligand>
</feature>
<feature type="binding site" evidence="1">
    <location>
        <position position="332"/>
    </location>
    <ligand>
        <name>ATP</name>
        <dbReference type="ChEBI" id="CHEBI:30616"/>
    </ligand>
</feature>
<feature type="binding site" evidence="1">
    <location>
        <begin position="358"/>
        <end position="361"/>
    </location>
    <ligand>
        <name>ATP</name>
        <dbReference type="ChEBI" id="CHEBI:30616"/>
    </ligand>
</feature>
<sequence length="413" mass="46459">MFRLSDFNYHDKVIFLRADLNSPVKDGKIISDARFRAVLHTIRYLLEHKAKVVIGTHQSKPYEEDYLTTEQHAEILSSLLGVKVKYVDDIFGKCARDAIKALKPSEVLMLENLRFAAEETKQNPLEYCERTHFVRKLSPLIDYVVNEAFAAAHRSQPSLVGFARIRPMIPGFLMEKEIKALTRAYESLERPKIYVLGGAKVEDSLNVAENVLRNEKADLILTGGLVGHVFTLAKGFDLGDANISFLDEKGLIKLVDRAEIILNEFYPYIRTPVDFAVEYKGERVEIDLLSDKQWIFDERPILDIGSRTIEKYSEILKEASIIVANGPMGVFEIEEFAKGTVEVFKAIGESKAFSIVGGGHSIASIYQYNIKGISHISTGGGAMLTFFAGQSLPVLQALKISYEKFKNKKELNQ</sequence>